<evidence type="ECO:0000255" key="1">
    <source>
        <dbReference type="HAMAP-Rule" id="MF_01161"/>
    </source>
</evidence>
<reference key="1">
    <citation type="journal article" date="2004" name="Proc. Natl. Acad. Sci. U.S.A.">
        <title>The genome sequence of the probiotic intestinal bacterium Lactobacillus johnsonii NCC 533.</title>
        <authorList>
            <person name="Pridmore R.D."/>
            <person name="Berger B."/>
            <person name="Desiere F."/>
            <person name="Vilanova D."/>
            <person name="Barretto C."/>
            <person name="Pittet A.-C."/>
            <person name="Zwahlen M.-C."/>
            <person name="Rouvet M."/>
            <person name="Altermann E."/>
            <person name="Barrangou R."/>
            <person name="Mollet B."/>
            <person name="Mercenier A."/>
            <person name="Klaenhammer T."/>
            <person name="Arigoni F."/>
            <person name="Schell M.A."/>
        </authorList>
    </citation>
    <scope>NUCLEOTIDE SEQUENCE [LARGE SCALE GENOMIC DNA]</scope>
    <source>
        <strain>CNCM I-1225 / La1 / NCC 533</strain>
    </source>
</reference>
<sequence length="431" mass="50251">MTKFTTFFTENNIEIKNKKFLLAASGGPDSVALLKMLVNFLPNPSEQLIVAHLDHCLRDDSFLESQLLQRLTSALKVKLVEKKWPVELHPQAGVEAKAREYRYAFLAKVGRKYQTDYLLTAHHGDDLIENILLKFIRSGDVAEMNSLQIVGNLGSMKLLRPLVKYSKDELLKYDKDHHLDFIEDKTNFEDDTLRNRLRHHVVPLLKKETSHLVKNANHFSESVALLSKCQSDLFDSLPSPINFSKALRGKKEDIARLNTHEAAAFFDYLIYKKWHQRIHFDEIDLNKNVIFNKENFQLLFYQKYYYLINRNELAVIDPKRKLVKLNEKFSFNGKKYLITQDEKSQKLAGYFYGEKAKYLEVGSLPQGSTLKLATGKQTKAKKKFAENGIPLALRPYCLTVWQEENPVYVESVYQNQEYNPNFIRYNVYIYF</sequence>
<name>TILS_LACJO</name>
<accession>Q74LA3</accession>
<gene>
    <name evidence="1" type="primary">tilS</name>
    <name type="ordered locus">LJ_0281</name>
</gene>
<keyword id="KW-0067">ATP-binding</keyword>
<keyword id="KW-0963">Cytoplasm</keyword>
<keyword id="KW-0436">Ligase</keyword>
<keyword id="KW-0547">Nucleotide-binding</keyword>
<keyword id="KW-0819">tRNA processing</keyword>
<organism>
    <name type="scientific">Lactobacillus johnsonii (strain CNCM I-12250 / La1 / NCC 533)</name>
    <dbReference type="NCBI Taxonomy" id="257314"/>
    <lineage>
        <taxon>Bacteria</taxon>
        <taxon>Bacillati</taxon>
        <taxon>Bacillota</taxon>
        <taxon>Bacilli</taxon>
        <taxon>Lactobacillales</taxon>
        <taxon>Lactobacillaceae</taxon>
        <taxon>Lactobacillus</taxon>
    </lineage>
</organism>
<feature type="chain" id="PRO_0000181707" description="tRNA(Ile)-lysidine synthase">
    <location>
        <begin position="1"/>
        <end position="431"/>
    </location>
</feature>
<feature type="binding site" evidence="1">
    <location>
        <begin position="25"/>
        <end position="30"/>
    </location>
    <ligand>
        <name>ATP</name>
        <dbReference type="ChEBI" id="CHEBI:30616"/>
    </ligand>
</feature>
<proteinExistence type="inferred from homology"/>
<dbReference type="EC" id="6.3.4.19" evidence="1"/>
<dbReference type="EMBL" id="AE017198">
    <property type="protein sequence ID" value="AAS08264.1"/>
    <property type="molecule type" value="Genomic_DNA"/>
</dbReference>
<dbReference type="RefSeq" id="WP_004898910.1">
    <property type="nucleotide sequence ID" value="NC_005362.1"/>
</dbReference>
<dbReference type="SMR" id="Q74LA3"/>
<dbReference type="KEGG" id="ljo:LJ_0281"/>
<dbReference type="eggNOG" id="COG0037">
    <property type="taxonomic scope" value="Bacteria"/>
</dbReference>
<dbReference type="HOGENOM" id="CLU_018869_0_2_9"/>
<dbReference type="Proteomes" id="UP000000581">
    <property type="component" value="Chromosome"/>
</dbReference>
<dbReference type="GO" id="GO:0005737">
    <property type="term" value="C:cytoplasm"/>
    <property type="evidence" value="ECO:0007669"/>
    <property type="project" value="UniProtKB-SubCell"/>
</dbReference>
<dbReference type="GO" id="GO:0005524">
    <property type="term" value="F:ATP binding"/>
    <property type="evidence" value="ECO:0007669"/>
    <property type="project" value="UniProtKB-UniRule"/>
</dbReference>
<dbReference type="GO" id="GO:0032267">
    <property type="term" value="F:tRNA(Ile)-lysidine synthase activity"/>
    <property type="evidence" value="ECO:0007669"/>
    <property type="project" value="UniProtKB-EC"/>
</dbReference>
<dbReference type="GO" id="GO:0006400">
    <property type="term" value="P:tRNA modification"/>
    <property type="evidence" value="ECO:0007669"/>
    <property type="project" value="UniProtKB-UniRule"/>
</dbReference>
<dbReference type="CDD" id="cd01992">
    <property type="entry name" value="TilS_N"/>
    <property type="match status" value="1"/>
</dbReference>
<dbReference type="Gene3D" id="3.40.50.620">
    <property type="entry name" value="HUPs"/>
    <property type="match status" value="1"/>
</dbReference>
<dbReference type="HAMAP" id="MF_01161">
    <property type="entry name" value="tRNA_Ile_lys_synt"/>
    <property type="match status" value="1"/>
</dbReference>
<dbReference type="InterPro" id="IPR014729">
    <property type="entry name" value="Rossmann-like_a/b/a_fold"/>
</dbReference>
<dbReference type="InterPro" id="IPR011063">
    <property type="entry name" value="TilS/TtcA_N"/>
</dbReference>
<dbReference type="InterPro" id="IPR012094">
    <property type="entry name" value="tRNA_Ile_lys_synt"/>
</dbReference>
<dbReference type="InterPro" id="IPR012795">
    <property type="entry name" value="tRNA_Ile_lys_synt_N"/>
</dbReference>
<dbReference type="NCBIfam" id="TIGR02432">
    <property type="entry name" value="lysidine_TilS_N"/>
    <property type="match status" value="1"/>
</dbReference>
<dbReference type="PANTHER" id="PTHR43033">
    <property type="entry name" value="TRNA(ILE)-LYSIDINE SYNTHASE-RELATED"/>
    <property type="match status" value="1"/>
</dbReference>
<dbReference type="PANTHER" id="PTHR43033:SF1">
    <property type="entry name" value="TRNA(ILE)-LYSIDINE SYNTHASE-RELATED"/>
    <property type="match status" value="1"/>
</dbReference>
<dbReference type="Pfam" id="PF01171">
    <property type="entry name" value="ATP_bind_3"/>
    <property type="match status" value="1"/>
</dbReference>
<dbReference type="SUPFAM" id="SSF52402">
    <property type="entry name" value="Adenine nucleotide alpha hydrolases-like"/>
    <property type="match status" value="1"/>
</dbReference>
<protein>
    <recommendedName>
        <fullName evidence="1">tRNA(Ile)-lysidine synthase</fullName>
        <ecNumber evidence="1">6.3.4.19</ecNumber>
    </recommendedName>
    <alternativeName>
        <fullName evidence="1">tRNA(Ile)-2-lysyl-cytidine synthase</fullName>
    </alternativeName>
    <alternativeName>
        <fullName evidence="1">tRNA(Ile)-lysidine synthetase</fullName>
    </alternativeName>
</protein>
<comment type="function">
    <text evidence="1">Ligates lysine onto the cytidine present at position 34 of the AUA codon-specific tRNA(Ile) that contains the anticodon CAU, in an ATP-dependent manner. Cytidine is converted to lysidine, thus changing the amino acid specificity of the tRNA from methionine to isoleucine.</text>
</comment>
<comment type="catalytic activity">
    <reaction evidence="1">
        <text>cytidine(34) in tRNA(Ile2) + L-lysine + ATP = lysidine(34) in tRNA(Ile2) + AMP + diphosphate + H(+)</text>
        <dbReference type="Rhea" id="RHEA:43744"/>
        <dbReference type="Rhea" id="RHEA-COMP:10625"/>
        <dbReference type="Rhea" id="RHEA-COMP:10670"/>
        <dbReference type="ChEBI" id="CHEBI:15378"/>
        <dbReference type="ChEBI" id="CHEBI:30616"/>
        <dbReference type="ChEBI" id="CHEBI:32551"/>
        <dbReference type="ChEBI" id="CHEBI:33019"/>
        <dbReference type="ChEBI" id="CHEBI:82748"/>
        <dbReference type="ChEBI" id="CHEBI:83665"/>
        <dbReference type="ChEBI" id="CHEBI:456215"/>
        <dbReference type="EC" id="6.3.4.19"/>
    </reaction>
</comment>
<comment type="subcellular location">
    <subcellularLocation>
        <location evidence="1">Cytoplasm</location>
    </subcellularLocation>
</comment>
<comment type="domain">
    <text>The N-terminal region contains the highly conserved SGGXDS motif, predicted to be a P-loop motif involved in ATP binding.</text>
</comment>
<comment type="similarity">
    <text evidence="1">Belongs to the tRNA(Ile)-lysidine synthase family.</text>
</comment>